<feature type="chain" id="PRO_1000062890" description="Transcriptional regulator MraZ">
    <location>
        <begin position="1"/>
        <end position="142"/>
    </location>
</feature>
<feature type="domain" description="SpoVT-AbrB 1" evidence="2">
    <location>
        <begin position="5"/>
        <end position="47"/>
    </location>
</feature>
<feature type="domain" description="SpoVT-AbrB 2" evidence="2">
    <location>
        <begin position="76"/>
        <end position="119"/>
    </location>
</feature>
<gene>
    <name evidence="1" type="primary">mraZ</name>
    <name type="ordered locus">Lreu_0584</name>
</gene>
<comment type="subunit">
    <text evidence="1">Forms oligomers.</text>
</comment>
<comment type="subcellular location">
    <subcellularLocation>
        <location evidence="1">Cytoplasm</location>
        <location evidence="1">Nucleoid</location>
    </subcellularLocation>
</comment>
<comment type="similarity">
    <text evidence="1">Belongs to the MraZ family.</text>
</comment>
<evidence type="ECO:0000255" key="1">
    <source>
        <dbReference type="HAMAP-Rule" id="MF_01008"/>
    </source>
</evidence>
<evidence type="ECO:0000255" key="2">
    <source>
        <dbReference type="PROSITE-ProRule" id="PRU01076"/>
    </source>
</evidence>
<name>MRAZ_LIMRD</name>
<reference key="1">
    <citation type="journal article" date="2011" name="PLoS Genet.">
        <title>The evolution of host specialization in the vertebrate gut symbiont Lactobacillus reuteri.</title>
        <authorList>
            <person name="Frese S.A."/>
            <person name="Benson A.K."/>
            <person name="Tannock G.W."/>
            <person name="Loach D.M."/>
            <person name="Kim J."/>
            <person name="Zhang M."/>
            <person name="Oh P.L."/>
            <person name="Heng N.C."/>
            <person name="Patil P.B."/>
            <person name="Juge N."/>
            <person name="Mackenzie D.A."/>
            <person name="Pearson B.M."/>
            <person name="Lapidus A."/>
            <person name="Dalin E."/>
            <person name="Tice H."/>
            <person name="Goltsman E."/>
            <person name="Land M."/>
            <person name="Hauser L."/>
            <person name="Ivanova N."/>
            <person name="Kyrpides N.C."/>
            <person name="Walter J."/>
        </authorList>
    </citation>
    <scope>NUCLEOTIDE SEQUENCE [LARGE SCALE GENOMIC DNA]</scope>
    <source>
        <strain>DSM 20016</strain>
    </source>
</reference>
<organism>
    <name type="scientific">Limosilactobacillus reuteri (strain DSM 20016)</name>
    <name type="common">Lactobacillus reuteri</name>
    <dbReference type="NCBI Taxonomy" id="557436"/>
    <lineage>
        <taxon>Bacteria</taxon>
        <taxon>Bacillati</taxon>
        <taxon>Bacillota</taxon>
        <taxon>Bacilli</taxon>
        <taxon>Lactobacillales</taxon>
        <taxon>Lactobacillaceae</taxon>
        <taxon>Limosilactobacillus</taxon>
    </lineage>
</organism>
<proteinExistence type="inferred from homology"/>
<sequence length="142" mass="16246">MLMGEFTHTIDSKGRLIIPAKFREQLGAHFIVTRGLDGCLFGYPLNEWAILEQKLKALPLTKRDARAFVRFLYSAATDCEIDKQGRINIPITLRTHASLEKKCVIVGVSNRLEIWSAERWNKFTSETADNFDEIAEDLNIDF</sequence>
<accession>A5VJ27</accession>
<keyword id="KW-0963">Cytoplasm</keyword>
<keyword id="KW-0238">DNA-binding</keyword>
<keyword id="KW-1185">Reference proteome</keyword>
<keyword id="KW-0677">Repeat</keyword>
<keyword id="KW-0804">Transcription</keyword>
<keyword id="KW-0805">Transcription regulation</keyword>
<protein>
    <recommendedName>
        <fullName>Transcriptional regulator MraZ</fullName>
    </recommendedName>
</protein>
<dbReference type="EMBL" id="CP000705">
    <property type="protein sequence ID" value="ABQ82851.1"/>
    <property type="molecule type" value="Genomic_DNA"/>
</dbReference>
<dbReference type="RefSeq" id="WP_003666752.1">
    <property type="nucleotide sequence ID" value="NZ_AZDD01000002.1"/>
</dbReference>
<dbReference type="SMR" id="A5VJ27"/>
<dbReference type="STRING" id="557436.Lreu_0584"/>
<dbReference type="GeneID" id="77190736"/>
<dbReference type="KEGG" id="lre:Lreu_0584"/>
<dbReference type="PATRIC" id="fig|557436.17.peg.656"/>
<dbReference type="eggNOG" id="COG2001">
    <property type="taxonomic scope" value="Bacteria"/>
</dbReference>
<dbReference type="HOGENOM" id="CLU_107907_0_5_9"/>
<dbReference type="Proteomes" id="UP000001991">
    <property type="component" value="Chromosome"/>
</dbReference>
<dbReference type="GO" id="GO:0005737">
    <property type="term" value="C:cytoplasm"/>
    <property type="evidence" value="ECO:0007669"/>
    <property type="project" value="UniProtKB-UniRule"/>
</dbReference>
<dbReference type="GO" id="GO:0009295">
    <property type="term" value="C:nucleoid"/>
    <property type="evidence" value="ECO:0007669"/>
    <property type="project" value="UniProtKB-SubCell"/>
</dbReference>
<dbReference type="GO" id="GO:0003700">
    <property type="term" value="F:DNA-binding transcription factor activity"/>
    <property type="evidence" value="ECO:0007669"/>
    <property type="project" value="UniProtKB-UniRule"/>
</dbReference>
<dbReference type="GO" id="GO:0000976">
    <property type="term" value="F:transcription cis-regulatory region binding"/>
    <property type="evidence" value="ECO:0007669"/>
    <property type="project" value="TreeGrafter"/>
</dbReference>
<dbReference type="GO" id="GO:2000143">
    <property type="term" value="P:negative regulation of DNA-templated transcription initiation"/>
    <property type="evidence" value="ECO:0007669"/>
    <property type="project" value="TreeGrafter"/>
</dbReference>
<dbReference type="CDD" id="cd16321">
    <property type="entry name" value="MraZ_C"/>
    <property type="match status" value="1"/>
</dbReference>
<dbReference type="CDD" id="cd16320">
    <property type="entry name" value="MraZ_N"/>
    <property type="match status" value="1"/>
</dbReference>
<dbReference type="FunFam" id="3.40.1550.20:FF:000002">
    <property type="entry name" value="Transcriptional regulator MraZ"/>
    <property type="match status" value="1"/>
</dbReference>
<dbReference type="Gene3D" id="3.40.1550.20">
    <property type="entry name" value="Transcriptional regulator MraZ domain"/>
    <property type="match status" value="1"/>
</dbReference>
<dbReference type="HAMAP" id="MF_01008">
    <property type="entry name" value="MraZ"/>
    <property type="match status" value="1"/>
</dbReference>
<dbReference type="InterPro" id="IPR003444">
    <property type="entry name" value="MraZ"/>
</dbReference>
<dbReference type="InterPro" id="IPR035644">
    <property type="entry name" value="MraZ_C"/>
</dbReference>
<dbReference type="InterPro" id="IPR020603">
    <property type="entry name" value="MraZ_dom"/>
</dbReference>
<dbReference type="InterPro" id="IPR035642">
    <property type="entry name" value="MraZ_N"/>
</dbReference>
<dbReference type="InterPro" id="IPR038619">
    <property type="entry name" value="MraZ_sf"/>
</dbReference>
<dbReference type="InterPro" id="IPR007159">
    <property type="entry name" value="SpoVT-AbrB_dom"/>
</dbReference>
<dbReference type="InterPro" id="IPR037914">
    <property type="entry name" value="SpoVT-AbrB_sf"/>
</dbReference>
<dbReference type="NCBIfam" id="TIGR00242">
    <property type="entry name" value="division/cell wall cluster transcriptional repressor MraZ"/>
    <property type="match status" value="1"/>
</dbReference>
<dbReference type="PANTHER" id="PTHR34701">
    <property type="entry name" value="TRANSCRIPTIONAL REGULATOR MRAZ"/>
    <property type="match status" value="1"/>
</dbReference>
<dbReference type="PANTHER" id="PTHR34701:SF1">
    <property type="entry name" value="TRANSCRIPTIONAL REGULATOR MRAZ"/>
    <property type="match status" value="1"/>
</dbReference>
<dbReference type="Pfam" id="PF02381">
    <property type="entry name" value="MraZ"/>
    <property type="match status" value="2"/>
</dbReference>
<dbReference type="SUPFAM" id="SSF89447">
    <property type="entry name" value="AbrB/MazE/MraZ-like"/>
    <property type="match status" value="1"/>
</dbReference>
<dbReference type="PROSITE" id="PS51740">
    <property type="entry name" value="SPOVT_ABRB"/>
    <property type="match status" value="2"/>
</dbReference>